<evidence type="ECO:0000255" key="1">
    <source>
        <dbReference type="HAMAP-Rule" id="MF_01208"/>
    </source>
</evidence>
<reference key="1">
    <citation type="journal article" date="2007" name="PLoS Biol.">
        <title>Evolution of symbiotic bacteria in the distal human intestine.</title>
        <authorList>
            <person name="Xu J."/>
            <person name="Mahowald M.A."/>
            <person name="Ley R.E."/>
            <person name="Lozupone C.A."/>
            <person name="Hamady M."/>
            <person name="Martens E.C."/>
            <person name="Henrissat B."/>
            <person name="Coutinho P.M."/>
            <person name="Minx P."/>
            <person name="Latreille P."/>
            <person name="Cordum H."/>
            <person name="Van Brunt A."/>
            <person name="Kim K."/>
            <person name="Fulton R.S."/>
            <person name="Fulton L.A."/>
            <person name="Clifton S.W."/>
            <person name="Wilson R.K."/>
            <person name="Knight R.D."/>
            <person name="Gordon J.I."/>
        </authorList>
    </citation>
    <scope>NUCLEOTIDE SEQUENCE [LARGE SCALE GENOMIC DNA]</scope>
    <source>
        <strain>ATCC 8482 / DSM 1447 / JCM 5826 / CCUG 4940 / NBRC 14291 / NCTC 11154</strain>
    </source>
</reference>
<gene>
    <name evidence="1" type="primary">pyrE</name>
    <name type="ordered locus">BVU_0860</name>
</gene>
<dbReference type="EC" id="2.4.2.10" evidence="1"/>
<dbReference type="EMBL" id="CP000139">
    <property type="protein sequence ID" value="ABR38555.1"/>
    <property type="molecule type" value="Genomic_DNA"/>
</dbReference>
<dbReference type="RefSeq" id="WP_005844513.1">
    <property type="nucleotide sequence ID" value="NZ_JANSWM010000124.1"/>
</dbReference>
<dbReference type="SMR" id="A6KYP1"/>
<dbReference type="STRING" id="435590.BVU_0860"/>
<dbReference type="PaxDb" id="435590-BVU_0860"/>
<dbReference type="GeneID" id="5301827"/>
<dbReference type="KEGG" id="bvu:BVU_0860"/>
<dbReference type="eggNOG" id="COG0461">
    <property type="taxonomic scope" value="Bacteria"/>
</dbReference>
<dbReference type="HOGENOM" id="CLU_074878_1_1_10"/>
<dbReference type="BioCyc" id="BVUL435590:G1G59-904-MONOMER"/>
<dbReference type="UniPathway" id="UPA00070">
    <property type="reaction ID" value="UER00119"/>
</dbReference>
<dbReference type="Proteomes" id="UP000002861">
    <property type="component" value="Chromosome"/>
</dbReference>
<dbReference type="GO" id="GO:0000287">
    <property type="term" value="F:magnesium ion binding"/>
    <property type="evidence" value="ECO:0007669"/>
    <property type="project" value="UniProtKB-UniRule"/>
</dbReference>
<dbReference type="GO" id="GO:0004588">
    <property type="term" value="F:orotate phosphoribosyltransferase activity"/>
    <property type="evidence" value="ECO:0007669"/>
    <property type="project" value="UniProtKB-UniRule"/>
</dbReference>
<dbReference type="GO" id="GO:0044205">
    <property type="term" value="P:'de novo' UMP biosynthetic process"/>
    <property type="evidence" value="ECO:0007669"/>
    <property type="project" value="UniProtKB-UniRule"/>
</dbReference>
<dbReference type="GO" id="GO:0019856">
    <property type="term" value="P:pyrimidine nucleobase biosynthetic process"/>
    <property type="evidence" value="ECO:0007669"/>
    <property type="project" value="TreeGrafter"/>
</dbReference>
<dbReference type="CDD" id="cd06223">
    <property type="entry name" value="PRTases_typeI"/>
    <property type="match status" value="1"/>
</dbReference>
<dbReference type="Gene3D" id="3.40.50.2020">
    <property type="match status" value="1"/>
</dbReference>
<dbReference type="HAMAP" id="MF_01208">
    <property type="entry name" value="PyrE"/>
    <property type="match status" value="1"/>
</dbReference>
<dbReference type="InterPro" id="IPR023031">
    <property type="entry name" value="OPRT"/>
</dbReference>
<dbReference type="InterPro" id="IPR004467">
    <property type="entry name" value="Or_phspho_trans_dom"/>
</dbReference>
<dbReference type="InterPro" id="IPR000836">
    <property type="entry name" value="PRibTrfase_dom"/>
</dbReference>
<dbReference type="InterPro" id="IPR029057">
    <property type="entry name" value="PRTase-like"/>
</dbReference>
<dbReference type="NCBIfam" id="TIGR00336">
    <property type="entry name" value="pyrE"/>
    <property type="match status" value="1"/>
</dbReference>
<dbReference type="PANTHER" id="PTHR19278">
    <property type="entry name" value="OROTATE PHOSPHORIBOSYLTRANSFERASE"/>
    <property type="match status" value="1"/>
</dbReference>
<dbReference type="PANTHER" id="PTHR19278:SF9">
    <property type="entry name" value="URIDINE 5'-MONOPHOSPHATE SYNTHASE"/>
    <property type="match status" value="1"/>
</dbReference>
<dbReference type="Pfam" id="PF00156">
    <property type="entry name" value="Pribosyltran"/>
    <property type="match status" value="1"/>
</dbReference>
<dbReference type="SUPFAM" id="SSF53271">
    <property type="entry name" value="PRTase-like"/>
    <property type="match status" value="1"/>
</dbReference>
<dbReference type="PROSITE" id="PS00103">
    <property type="entry name" value="PUR_PYR_PR_TRANSFER"/>
    <property type="match status" value="1"/>
</dbReference>
<keyword id="KW-0328">Glycosyltransferase</keyword>
<keyword id="KW-0460">Magnesium</keyword>
<keyword id="KW-0665">Pyrimidine biosynthesis</keyword>
<keyword id="KW-0808">Transferase</keyword>
<organism>
    <name type="scientific">Phocaeicola vulgatus (strain ATCC 8482 / DSM 1447 / JCM 5826 / CCUG 4940 / NBRC 14291 / NCTC 11154)</name>
    <name type="common">Bacteroides vulgatus</name>
    <dbReference type="NCBI Taxonomy" id="435590"/>
    <lineage>
        <taxon>Bacteria</taxon>
        <taxon>Pseudomonadati</taxon>
        <taxon>Bacteroidota</taxon>
        <taxon>Bacteroidia</taxon>
        <taxon>Bacteroidales</taxon>
        <taxon>Bacteroidaceae</taxon>
        <taxon>Phocaeicola</taxon>
    </lineage>
</organism>
<proteinExistence type="inferred from homology"/>
<accession>A6KYP1</accession>
<protein>
    <recommendedName>
        <fullName evidence="1">Orotate phosphoribosyltransferase</fullName>
        <shortName evidence="1">OPRT</shortName>
        <shortName evidence="1">OPRTase</shortName>
        <ecNumber evidence="1">2.4.2.10</ecNumber>
    </recommendedName>
</protein>
<sequence length="212" mass="23411">MKTLEKLFAEKLLKIKAIKLQPANPFTWASGWKSPFYCDNRKTLSYPSLRNFVKLEISRIVLEKFGQVDAIAGVATGAIPQGALVAEELNLPFVYVRSTPKDHGLENLIEGELRPGMKVVVIEDLISTGGSSLKAVEAIRRDGCEVIGMVAAFTYGFPVAIEAFKEAKVNLVTLTNYEAVLDSALKTGYINEEDVPVLDNWRKDPAHWEAGK</sequence>
<name>PYRE_PHOV8</name>
<comment type="function">
    <text evidence="1">Catalyzes the transfer of a ribosyl phosphate group from 5-phosphoribose 1-diphosphate to orotate, leading to the formation of orotidine monophosphate (OMP).</text>
</comment>
<comment type="catalytic activity">
    <reaction evidence="1">
        <text>orotidine 5'-phosphate + diphosphate = orotate + 5-phospho-alpha-D-ribose 1-diphosphate</text>
        <dbReference type="Rhea" id="RHEA:10380"/>
        <dbReference type="ChEBI" id="CHEBI:30839"/>
        <dbReference type="ChEBI" id="CHEBI:33019"/>
        <dbReference type="ChEBI" id="CHEBI:57538"/>
        <dbReference type="ChEBI" id="CHEBI:58017"/>
        <dbReference type="EC" id="2.4.2.10"/>
    </reaction>
</comment>
<comment type="cofactor">
    <cofactor evidence="1">
        <name>Mg(2+)</name>
        <dbReference type="ChEBI" id="CHEBI:18420"/>
    </cofactor>
</comment>
<comment type="pathway">
    <text evidence="1">Pyrimidine metabolism; UMP biosynthesis via de novo pathway; UMP from orotate: step 1/2.</text>
</comment>
<comment type="subunit">
    <text evidence="1">Homodimer.</text>
</comment>
<comment type="similarity">
    <text evidence="1">Belongs to the purine/pyrimidine phosphoribosyltransferase family. PyrE subfamily.</text>
</comment>
<feature type="chain" id="PRO_1000066205" description="Orotate phosphoribosyltransferase">
    <location>
        <begin position="1"/>
        <end position="212"/>
    </location>
</feature>
<feature type="binding site" evidence="1">
    <location>
        <position position="97"/>
    </location>
    <ligand>
        <name>5-phospho-alpha-D-ribose 1-diphosphate</name>
        <dbReference type="ChEBI" id="CHEBI:58017"/>
        <note>ligand shared between dimeric partners</note>
    </ligand>
</feature>
<feature type="binding site" evidence="1">
    <location>
        <position position="101"/>
    </location>
    <ligand>
        <name>5-phospho-alpha-D-ribose 1-diphosphate</name>
        <dbReference type="ChEBI" id="CHEBI:58017"/>
        <note>ligand shared between dimeric partners</note>
    </ligand>
</feature>
<feature type="binding site" evidence="1">
    <location>
        <position position="103"/>
    </location>
    <ligand>
        <name>5-phospho-alpha-D-ribose 1-diphosphate</name>
        <dbReference type="ChEBI" id="CHEBI:58017"/>
        <note>ligand shared between dimeric partners</note>
    </ligand>
</feature>
<feature type="binding site" description="in other chain" evidence="1">
    <location>
        <begin position="123"/>
        <end position="131"/>
    </location>
    <ligand>
        <name>5-phospho-alpha-D-ribose 1-diphosphate</name>
        <dbReference type="ChEBI" id="CHEBI:58017"/>
        <note>ligand shared between dimeric partners</note>
    </ligand>
</feature>
<feature type="binding site" evidence="1">
    <location>
        <position position="127"/>
    </location>
    <ligand>
        <name>orotate</name>
        <dbReference type="ChEBI" id="CHEBI:30839"/>
    </ligand>
</feature>